<protein>
    <recommendedName>
        <fullName>Fibrinogen beta chain</fullName>
    </recommendedName>
    <component>
        <recommendedName>
            <fullName>Fibrinopeptide B</fullName>
        </recommendedName>
    </component>
</protein>
<reference key="1">
    <citation type="journal article" date="1965" name="Acta Chem. Scand.">
        <title>Studies on fibrinopeptides from mammals.</title>
        <authorList>
            <person name="Blombaeck B."/>
            <person name="Blombaeck M."/>
            <person name="Grondahl N.J."/>
        </authorList>
    </citation>
    <scope>PROTEIN SEQUENCE</scope>
</reference>
<proteinExistence type="evidence at protein level"/>
<keyword id="KW-1064">Adaptive immunity</keyword>
<keyword id="KW-0094">Blood coagulation</keyword>
<keyword id="KW-0175">Coiled coil</keyword>
<keyword id="KW-0903">Direct protein sequencing</keyword>
<keyword id="KW-1015">Disulfide bond</keyword>
<keyword id="KW-0356">Hemostasis</keyword>
<keyword id="KW-0391">Immunity</keyword>
<keyword id="KW-0399">Innate immunity</keyword>
<keyword id="KW-1185">Reference proteome</keyword>
<keyword id="KW-0964">Secreted</keyword>
<name>FIBB_VULVU</name>
<sequence length="19" mass="2305">EYYDDTDEEERIVSTVDAR</sequence>
<dbReference type="STRING" id="9627.ENSVVUP00000034637"/>
<dbReference type="Proteomes" id="UP000286640">
    <property type="component" value="Unplaced"/>
</dbReference>
<dbReference type="GO" id="GO:0005576">
    <property type="term" value="C:extracellular region"/>
    <property type="evidence" value="ECO:0007669"/>
    <property type="project" value="UniProtKB-SubCell"/>
</dbReference>
<dbReference type="GO" id="GO:0002250">
    <property type="term" value="P:adaptive immune response"/>
    <property type="evidence" value="ECO:0007669"/>
    <property type="project" value="UniProtKB-KW"/>
</dbReference>
<dbReference type="GO" id="GO:0007596">
    <property type="term" value="P:blood coagulation"/>
    <property type="evidence" value="ECO:0007669"/>
    <property type="project" value="UniProtKB-KW"/>
</dbReference>
<dbReference type="GO" id="GO:0045087">
    <property type="term" value="P:innate immune response"/>
    <property type="evidence" value="ECO:0007669"/>
    <property type="project" value="UniProtKB-KW"/>
</dbReference>
<comment type="function">
    <text evidence="1">Cleaved by the protease thrombin to yield monomers which, together with fibrinogen alpha (FGA) and fibrinogen gamma (FGG), polymerize to form an insoluble fibrin matrix. Fibrin has a major function in hemostasis as one of the primary components of blood clots. In addition, functions during the early stages of wound repair to stabilize the lesion and guide cell migration during re-epithelialization. Was originally thought to be essential for platelet aggregation, based on in vitro studies using anticoagulated blood. However subsequent studies have shown that it is not absolutely required for thrombus formation in vivo. Enhances expression of SELP in activated platelets. Maternal fibrinogen is essential for successful pregnancy. Fibrin deposition is also associated with infection, where it protects against IFNG-mediated hemorrhage. May also facilitate the antibacterial immune response via both innate and T-cell mediated pathways.</text>
</comment>
<comment type="subunit">
    <text evidence="2">Heterohexamer; disulfide linked. Contains 2 sets of 3 non-identical chains (alpha, beta and gamma). The 2 heterotrimers are in head to head conformation with the N-termini in a small central domain (By similarity).</text>
</comment>
<comment type="subcellular location">
    <subcellularLocation>
        <location>Secreted</location>
    </subcellularLocation>
</comment>
<comment type="domain">
    <text evidence="2">A long coiled coil structure formed by 3 polypeptide chains connects the central nodule to the C-terminal domains (distal nodules). The long C-terminal ends of the alpha chains fold back, contributing a fourth strand to the coiled coil structure.</text>
</comment>
<comment type="PTM">
    <text>Conversion of fibrinogen to fibrin is triggered by thrombin, which cleaves fibrinopeptides A and B from alpha and beta chains, and thus exposes the N-terminal polymerization sites responsible for the formation of the soft clot.</text>
</comment>
<evidence type="ECO:0000250" key="1">
    <source>
        <dbReference type="UniProtKB" id="E9PV24"/>
    </source>
</evidence>
<evidence type="ECO:0000250" key="2">
    <source>
        <dbReference type="UniProtKB" id="P02675"/>
    </source>
</evidence>
<feature type="peptide" id="PRO_0000009091" description="Fibrinopeptide B">
    <location>
        <begin position="1"/>
        <end position="19"/>
    </location>
</feature>
<feature type="non-terminal residue">
    <location>
        <position position="19"/>
    </location>
</feature>
<accession>P14482</accession>
<gene>
    <name type="primary">FGB</name>
</gene>
<organism>
    <name type="scientific">Vulpes vulpes</name>
    <name type="common">Red fox</name>
    <dbReference type="NCBI Taxonomy" id="9627"/>
    <lineage>
        <taxon>Eukaryota</taxon>
        <taxon>Metazoa</taxon>
        <taxon>Chordata</taxon>
        <taxon>Craniata</taxon>
        <taxon>Vertebrata</taxon>
        <taxon>Euteleostomi</taxon>
        <taxon>Mammalia</taxon>
        <taxon>Eutheria</taxon>
        <taxon>Laurasiatheria</taxon>
        <taxon>Carnivora</taxon>
        <taxon>Caniformia</taxon>
        <taxon>Canidae</taxon>
        <taxon>Vulpes</taxon>
    </lineage>
</organism>